<proteinExistence type="inferred from homology"/>
<feature type="chain" id="PRO_1000199705" description="Ubiquinone biosynthesis O-methyltransferase">
    <location>
        <begin position="1"/>
        <end position="239"/>
    </location>
</feature>
<feature type="binding site" evidence="1">
    <location>
        <position position="44"/>
    </location>
    <ligand>
        <name>S-adenosyl-L-methionine</name>
        <dbReference type="ChEBI" id="CHEBI:59789"/>
    </ligand>
</feature>
<feature type="binding site" evidence="1">
    <location>
        <position position="63"/>
    </location>
    <ligand>
        <name>S-adenosyl-L-methionine</name>
        <dbReference type="ChEBI" id="CHEBI:59789"/>
    </ligand>
</feature>
<feature type="binding site" evidence="1">
    <location>
        <position position="84"/>
    </location>
    <ligand>
        <name>S-adenosyl-L-methionine</name>
        <dbReference type="ChEBI" id="CHEBI:59789"/>
    </ligand>
</feature>
<feature type="binding site" evidence="1">
    <location>
        <position position="128"/>
    </location>
    <ligand>
        <name>S-adenosyl-L-methionine</name>
        <dbReference type="ChEBI" id="CHEBI:59789"/>
    </ligand>
</feature>
<organism>
    <name type="scientific">Xanthomonas campestris pv. campestris (strain B100)</name>
    <dbReference type="NCBI Taxonomy" id="509169"/>
    <lineage>
        <taxon>Bacteria</taxon>
        <taxon>Pseudomonadati</taxon>
        <taxon>Pseudomonadota</taxon>
        <taxon>Gammaproteobacteria</taxon>
        <taxon>Lysobacterales</taxon>
        <taxon>Lysobacteraceae</taxon>
        <taxon>Xanthomonas</taxon>
    </lineage>
</organism>
<evidence type="ECO:0000255" key="1">
    <source>
        <dbReference type="HAMAP-Rule" id="MF_00472"/>
    </source>
</evidence>
<accession>B0RS27</accession>
<gene>
    <name evidence="1" type="primary">ubiG</name>
    <name type="ordered locus">xcc-b100_1909</name>
</gene>
<dbReference type="EC" id="2.1.1.222" evidence="1"/>
<dbReference type="EC" id="2.1.1.64" evidence="1"/>
<dbReference type="EMBL" id="AM920689">
    <property type="protein sequence ID" value="CAP51262.1"/>
    <property type="molecule type" value="Genomic_DNA"/>
</dbReference>
<dbReference type="SMR" id="B0RS27"/>
<dbReference type="KEGG" id="xca:xcc-b100_1909"/>
<dbReference type="HOGENOM" id="CLU_042432_5_0_6"/>
<dbReference type="UniPathway" id="UPA00232"/>
<dbReference type="Proteomes" id="UP000001188">
    <property type="component" value="Chromosome"/>
</dbReference>
<dbReference type="GO" id="GO:0102208">
    <property type="term" value="F:2-polyprenyl-6-hydroxyphenol methylase activity"/>
    <property type="evidence" value="ECO:0007669"/>
    <property type="project" value="UniProtKB-EC"/>
</dbReference>
<dbReference type="GO" id="GO:0061542">
    <property type="term" value="F:3-demethylubiquinol 3-O-methyltransferase activity"/>
    <property type="evidence" value="ECO:0007669"/>
    <property type="project" value="UniProtKB-UniRule"/>
</dbReference>
<dbReference type="GO" id="GO:0010420">
    <property type="term" value="F:polyprenyldihydroxybenzoate methyltransferase activity"/>
    <property type="evidence" value="ECO:0007669"/>
    <property type="project" value="InterPro"/>
</dbReference>
<dbReference type="GO" id="GO:0032259">
    <property type="term" value="P:methylation"/>
    <property type="evidence" value="ECO:0007669"/>
    <property type="project" value="UniProtKB-KW"/>
</dbReference>
<dbReference type="CDD" id="cd02440">
    <property type="entry name" value="AdoMet_MTases"/>
    <property type="match status" value="1"/>
</dbReference>
<dbReference type="FunFam" id="3.40.50.150:FF:000028">
    <property type="entry name" value="Ubiquinone biosynthesis O-methyltransferase"/>
    <property type="match status" value="1"/>
</dbReference>
<dbReference type="Gene3D" id="3.40.50.150">
    <property type="entry name" value="Vaccinia Virus protein VP39"/>
    <property type="match status" value="1"/>
</dbReference>
<dbReference type="HAMAP" id="MF_00472">
    <property type="entry name" value="UbiG"/>
    <property type="match status" value="1"/>
</dbReference>
<dbReference type="InterPro" id="IPR029063">
    <property type="entry name" value="SAM-dependent_MTases_sf"/>
</dbReference>
<dbReference type="InterPro" id="IPR010233">
    <property type="entry name" value="UbiG_MeTrfase"/>
</dbReference>
<dbReference type="NCBIfam" id="TIGR01983">
    <property type="entry name" value="UbiG"/>
    <property type="match status" value="1"/>
</dbReference>
<dbReference type="PANTHER" id="PTHR43464">
    <property type="entry name" value="METHYLTRANSFERASE"/>
    <property type="match status" value="1"/>
</dbReference>
<dbReference type="PANTHER" id="PTHR43464:SF19">
    <property type="entry name" value="UBIQUINONE BIOSYNTHESIS O-METHYLTRANSFERASE, MITOCHONDRIAL"/>
    <property type="match status" value="1"/>
</dbReference>
<dbReference type="Pfam" id="PF13489">
    <property type="entry name" value="Methyltransf_23"/>
    <property type="match status" value="1"/>
</dbReference>
<dbReference type="SUPFAM" id="SSF53335">
    <property type="entry name" value="S-adenosyl-L-methionine-dependent methyltransferases"/>
    <property type="match status" value="1"/>
</dbReference>
<comment type="function">
    <text evidence="1">O-methyltransferase that catalyzes the 2 O-methylation steps in the ubiquinone biosynthetic pathway.</text>
</comment>
<comment type="catalytic activity">
    <reaction evidence="1">
        <text>a 3-demethylubiquinol + S-adenosyl-L-methionine = a ubiquinol + S-adenosyl-L-homocysteine + H(+)</text>
        <dbReference type="Rhea" id="RHEA:44380"/>
        <dbReference type="Rhea" id="RHEA-COMP:9566"/>
        <dbReference type="Rhea" id="RHEA-COMP:10914"/>
        <dbReference type="ChEBI" id="CHEBI:15378"/>
        <dbReference type="ChEBI" id="CHEBI:17976"/>
        <dbReference type="ChEBI" id="CHEBI:57856"/>
        <dbReference type="ChEBI" id="CHEBI:59789"/>
        <dbReference type="ChEBI" id="CHEBI:84422"/>
        <dbReference type="EC" id="2.1.1.64"/>
    </reaction>
</comment>
<comment type="catalytic activity">
    <reaction evidence="1">
        <text>a 3-(all-trans-polyprenyl)benzene-1,2-diol + S-adenosyl-L-methionine = a 2-methoxy-6-(all-trans-polyprenyl)phenol + S-adenosyl-L-homocysteine + H(+)</text>
        <dbReference type="Rhea" id="RHEA:31411"/>
        <dbReference type="Rhea" id="RHEA-COMP:9550"/>
        <dbReference type="Rhea" id="RHEA-COMP:9551"/>
        <dbReference type="ChEBI" id="CHEBI:15378"/>
        <dbReference type="ChEBI" id="CHEBI:57856"/>
        <dbReference type="ChEBI" id="CHEBI:59789"/>
        <dbReference type="ChEBI" id="CHEBI:62729"/>
        <dbReference type="ChEBI" id="CHEBI:62731"/>
        <dbReference type="EC" id="2.1.1.222"/>
    </reaction>
</comment>
<comment type="pathway">
    <text evidence="1">Cofactor biosynthesis; ubiquinone biosynthesis.</text>
</comment>
<comment type="similarity">
    <text evidence="1">Belongs to the methyltransferase superfamily. UbiG/COQ3 family.</text>
</comment>
<protein>
    <recommendedName>
        <fullName evidence="1">Ubiquinone biosynthesis O-methyltransferase</fullName>
    </recommendedName>
    <alternativeName>
        <fullName evidence="1">2-polyprenyl-6-hydroxyphenol methylase</fullName>
        <ecNumber evidence="1">2.1.1.222</ecNumber>
    </alternativeName>
    <alternativeName>
        <fullName evidence="1">3-demethylubiquinone 3-O-methyltransferase</fullName>
        <ecNumber evidence="1">2.1.1.64</ecNumber>
    </alternativeName>
</protein>
<sequence length="239" mass="26039">MNPNPQSTSSNFHQTELDKFAALANRWWDADGPQKPLHALNPVRLDYVAARVALPGARVLDVGCGGGLLSEAMARLGAQVTAIDLAPELVKVARLHSLESSVQVDYRVQSVEDLAAEQPGSFDAVTCMEMLEHVPDPLAIIRACASLLKPGGTLFLSTLNRTPAAFALAVVGAEYIARLLPKGTHHYKDFIKPSELAAWLRTAELQLQDVSGMLYEPWRNRARLSSRTEVNYLACAVKP</sequence>
<keyword id="KW-0489">Methyltransferase</keyword>
<keyword id="KW-0949">S-adenosyl-L-methionine</keyword>
<keyword id="KW-0808">Transferase</keyword>
<keyword id="KW-0831">Ubiquinone biosynthesis</keyword>
<name>UBIG_XANCB</name>
<reference key="1">
    <citation type="journal article" date="2008" name="J. Biotechnol.">
        <title>The genome of Xanthomonas campestris pv. campestris B100 and its use for the reconstruction of metabolic pathways involved in xanthan biosynthesis.</title>
        <authorList>
            <person name="Vorhoelter F.-J."/>
            <person name="Schneiker S."/>
            <person name="Goesmann A."/>
            <person name="Krause L."/>
            <person name="Bekel T."/>
            <person name="Kaiser O."/>
            <person name="Linke B."/>
            <person name="Patschkowski T."/>
            <person name="Rueckert C."/>
            <person name="Schmid J."/>
            <person name="Sidhu V.K."/>
            <person name="Sieber V."/>
            <person name="Tauch A."/>
            <person name="Watt S.A."/>
            <person name="Weisshaar B."/>
            <person name="Becker A."/>
            <person name="Niehaus K."/>
            <person name="Puehler A."/>
        </authorList>
    </citation>
    <scope>NUCLEOTIDE SEQUENCE [LARGE SCALE GENOMIC DNA]</scope>
    <source>
        <strain>B100</strain>
    </source>
</reference>